<feature type="chain" id="PRO_1000017129" description="tRNA pseudouridine synthase A">
    <location>
        <begin position="1"/>
        <end position="252"/>
    </location>
</feature>
<feature type="active site" description="Nucleophile" evidence="1">
    <location>
        <position position="52"/>
    </location>
</feature>
<feature type="binding site" evidence="1">
    <location>
        <position position="111"/>
    </location>
    <ligand>
        <name>substrate</name>
    </ligand>
</feature>
<name>TRUA_PARD8</name>
<organism>
    <name type="scientific">Parabacteroides distasonis (strain ATCC 8503 / DSM 20701 / CIP 104284 / JCM 5825 / NCTC 11152)</name>
    <dbReference type="NCBI Taxonomy" id="435591"/>
    <lineage>
        <taxon>Bacteria</taxon>
        <taxon>Pseudomonadati</taxon>
        <taxon>Bacteroidota</taxon>
        <taxon>Bacteroidia</taxon>
        <taxon>Bacteroidales</taxon>
        <taxon>Tannerellaceae</taxon>
        <taxon>Parabacteroides</taxon>
    </lineage>
</organism>
<keyword id="KW-0413">Isomerase</keyword>
<keyword id="KW-1185">Reference proteome</keyword>
<keyword id="KW-0819">tRNA processing</keyword>
<protein>
    <recommendedName>
        <fullName evidence="1">tRNA pseudouridine synthase A</fullName>
        <ecNumber evidence="1">5.4.99.12</ecNumber>
    </recommendedName>
    <alternativeName>
        <fullName evidence="1">tRNA pseudouridine(38-40) synthase</fullName>
    </alternativeName>
    <alternativeName>
        <fullName evidence="1">tRNA pseudouridylate synthase I</fullName>
    </alternativeName>
    <alternativeName>
        <fullName evidence="1">tRNA-uridine isomerase I</fullName>
    </alternativeName>
</protein>
<accession>A6LDA7</accession>
<evidence type="ECO:0000255" key="1">
    <source>
        <dbReference type="HAMAP-Rule" id="MF_00171"/>
    </source>
</evidence>
<proteinExistence type="inferred from homology"/>
<gene>
    <name evidence="1" type="primary">truA</name>
    <name type="ordered locus">BDI_1936</name>
</gene>
<comment type="function">
    <text evidence="1">Formation of pseudouridine at positions 38, 39 and 40 in the anticodon stem and loop of transfer RNAs.</text>
</comment>
<comment type="catalytic activity">
    <reaction evidence="1">
        <text>uridine(38/39/40) in tRNA = pseudouridine(38/39/40) in tRNA</text>
        <dbReference type="Rhea" id="RHEA:22376"/>
        <dbReference type="Rhea" id="RHEA-COMP:10085"/>
        <dbReference type="Rhea" id="RHEA-COMP:10087"/>
        <dbReference type="ChEBI" id="CHEBI:65314"/>
        <dbReference type="ChEBI" id="CHEBI:65315"/>
        <dbReference type="EC" id="5.4.99.12"/>
    </reaction>
</comment>
<comment type="subunit">
    <text evidence="1">Homodimer.</text>
</comment>
<comment type="similarity">
    <text evidence="1">Belongs to the tRNA pseudouridine synthase TruA family.</text>
</comment>
<dbReference type="EC" id="5.4.99.12" evidence="1"/>
<dbReference type="EMBL" id="CP000140">
    <property type="protein sequence ID" value="ABR43671.1"/>
    <property type="molecule type" value="Genomic_DNA"/>
</dbReference>
<dbReference type="RefSeq" id="WP_009275803.1">
    <property type="nucleotide sequence ID" value="NC_009615.1"/>
</dbReference>
<dbReference type="SMR" id="A6LDA7"/>
<dbReference type="STRING" id="435591.BDI_1936"/>
<dbReference type="PaxDb" id="435591-BDI_1936"/>
<dbReference type="KEGG" id="pdi:BDI_1936"/>
<dbReference type="eggNOG" id="COG0101">
    <property type="taxonomic scope" value="Bacteria"/>
</dbReference>
<dbReference type="HOGENOM" id="CLU_014673_0_1_10"/>
<dbReference type="BioCyc" id="PDIS435591:G1G5A-1990-MONOMER"/>
<dbReference type="Proteomes" id="UP000000566">
    <property type="component" value="Chromosome"/>
</dbReference>
<dbReference type="GO" id="GO:0003723">
    <property type="term" value="F:RNA binding"/>
    <property type="evidence" value="ECO:0007669"/>
    <property type="project" value="InterPro"/>
</dbReference>
<dbReference type="GO" id="GO:0160147">
    <property type="term" value="F:tRNA pseudouridine(38-40) synthase activity"/>
    <property type="evidence" value="ECO:0007669"/>
    <property type="project" value="UniProtKB-EC"/>
</dbReference>
<dbReference type="GO" id="GO:0031119">
    <property type="term" value="P:tRNA pseudouridine synthesis"/>
    <property type="evidence" value="ECO:0007669"/>
    <property type="project" value="UniProtKB-UniRule"/>
</dbReference>
<dbReference type="CDD" id="cd02570">
    <property type="entry name" value="PseudoU_synth_EcTruA"/>
    <property type="match status" value="1"/>
</dbReference>
<dbReference type="FunFam" id="3.30.70.580:FF:000001">
    <property type="entry name" value="tRNA pseudouridine synthase A"/>
    <property type="match status" value="1"/>
</dbReference>
<dbReference type="Gene3D" id="3.30.70.660">
    <property type="entry name" value="Pseudouridine synthase I, catalytic domain, C-terminal subdomain"/>
    <property type="match status" value="1"/>
</dbReference>
<dbReference type="Gene3D" id="3.30.70.580">
    <property type="entry name" value="Pseudouridine synthase I, catalytic domain, N-terminal subdomain"/>
    <property type="match status" value="1"/>
</dbReference>
<dbReference type="HAMAP" id="MF_00171">
    <property type="entry name" value="TruA"/>
    <property type="match status" value="1"/>
</dbReference>
<dbReference type="InterPro" id="IPR020103">
    <property type="entry name" value="PsdUridine_synth_cat_dom_sf"/>
</dbReference>
<dbReference type="InterPro" id="IPR001406">
    <property type="entry name" value="PsdUridine_synth_TruA"/>
</dbReference>
<dbReference type="InterPro" id="IPR020097">
    <property type="entry name" value="PsdUridine_synth_TruA_a/b_dom"/>
</dbReference>
<dbReference type="InterPro" id="IPR020095">
    <property type="entry name" value="PsdUridine_synth_TruA_C"/>
</dbReference>
<dbReference type="InterPro" id="IPR020094">
    <property type="entry name" value="TruA/RsuA/RluB/E/F_N"/>
</dbReference>
<dbReference type="NCBIfam" id="TIGR00071">
    <property type="entry name" value="hisT_truA"/>
    <property type="match status" value="1"/>
</dbReference>
<dbReference type="PANTHER" id="PTHR11142">
    <property type="entry name" value="PSEUDOURIDYLATE SYNTHASE"/>
    <property type="match status" value="1"/>
</dbReference>
<dbReference type="PANTHER" id="PTHR11142:SF0">
    <property type="entry name" value="TRNA PSEUDOURIDINE SYNTHASE-LIKE 1"/>
    <property type="match status" value="1"/>
</dbReference>
<dbReference type="Pfam" id="PF01416">
    <property type="entry name" value="PseudoU_synth_1"/>
    <property type="match status" value="2"/>
</dbReference>
<dbReference type="PIRSF" id="PIRSF001430">
    <property type="entry name" value="tRNA_psdUrid_synth"/>
    <property type="match status" value="1"/>
</dbReference>
<dbReference type="SUPFAM" id="SSF55120">
    <property type="entry name" value="Pseudouridine synthase"/>
    <property type="match status" value="1"/>
</dbReference>
<reference key="1">
    <citation type="journal article" date="2007" name="PLoS Biol.">
        <title>Evolution of symbiotic bacteria in the distal human intestine.</title>
        <authorList>
            <person name="Xu J."/>
            <person name="Mahowald M.A."/>
            <person name="Ley R.E."/>
            <person name="Lozupone C.A."/>
            <person name="Hamady M."/>
            <person name="Martens E.C."/>
            <person name="Henrissat B."/>
            <person name="Coutinho P.M."/>
            <person name="Minx P."/>
            <person name="Latreille P."/>
            <person name="Cordum H."/>
            <person name="Van Brunt A."/>
            <person name="Kim K."/>
            <person name="Fulton R.S."/>
            <person name="Fulton L.A."/>
            <person name="Clifton S.W."/>
            <person name="Wilson R.K."/>
            <person name="Knight R.D."/>
            <person name="Gordon J.I."/>
        </authorList>
    </citation>
    <scope>NUCLEOTIDE SEQUENCE [LARGE SCALE GENOMIC DNA]</scope>
    <source>
        <strain>ATCC 8503 / DSM 20701 / CIP 104284 / JCM 5825 / NCTC 11152</strain>
    </source>
</reference>
<sequence>MRRYFIYLGYNGKNFRGWQIQPNGMTVQQSIEEALAILMRTPVPIVGAGRTDAGVHAHLMIAHFDWEEPIGDLVFLAEKLNRLLPKDIAVYKIVPVVPEAHARFDATSRTYKYYVTTKKDPFNHELVYKLPGRLDFEAMNEACKVLFDYIDFTSFSKLHTDVKTNNCHIQHAGWTQEGDIWVFTIRADRFLRNMVRAIVGTLLEVGRGRLTIDGFRNVIEAKDRCKAGTSVPGHALFLVDVTYPEELFPVED</sequence>